<keyword id="KW-0167">Capsid protein</keyword>
<keyword id="KW-1139">Helical capsid protein</keyword>
<keyword id="KW-1035">Host cytoplasm</keyword>
<keyword id="KW-0945">Host-virus interaction</keyword>
<keyword id="KW-0378">Hydrolase</keyword>
<keyword id="KW-1224">Inhibition of host IKBKE by virus</keyword>
<keyword id="KW-1090">Inhibition of host innate immune response by virus</keyword>
<keyword id="KW-1113">Inhibition of host RLR pathway by virus</keyword>
<keyword id="KW-0922">Interferon antiviral system evasion</keyword>
<keyword id="KW-0464">Manganese</keyword>
<keyword id="KW-0479">Metal-binding</keyword>
<keyword id="KW-0687">Ribonucleoprotein</keyword>
<keyword id="KW-0694">RNA-binding</keyword>
<keyword id="KW-0899">Viral immunoevasion</keyword>
<keyword id="KW-0543">Viral nucleoprotein</keyword>
<keyword id="KW-0946">Virion</keyword>
<keyword id="KW-0862">Zinc</keyword>
<accession>B2C4J1</accession>
<feature type="chain" id="PRO_0000361005" description="Nucleoprotein">
    <location>
        <begin position="1"/>
        <end position="562"/>
    </location>
</feature>
<feature type="region of interest" description="Binding site for the cap structure m7GTP" evidence="1">
    <location>
        <begin position="54"/>
        <end position="237"/>
    </location>
</feature>
<feature type="binding site" evidence="1">
    <location>
        <position position="381"/>
    </location>
    <ligand>
        <name>Mn(2+)</name>
        <dbReference type="ChEBI" id="CHEBI:29035"/>
    </ligand>
</feature>
<feature type="binding site" evidence="1">
    <location>
        <position position="383"/>
    </location>
    <ligand>
        <name>Mn(2+)</name>
        <dbReference type="ChEBI" id="CHEBI:29035"/>
    </ligand>
</feature>
<feature type="binding site" evidence="1">
    <location>
        <position position="391"/>
    </location>
    <ligand>
        <name>Zn(2+)</name>
        <dbReference type="ChEBI" id="CHEBI:29105"/>
    </ligand>
</feature>
<feature type="binding site" evidence="1">
    <location>
        <position position="498"/>
    </location>
    <ligand>
        <name>Zn(2+)</name>
        <dbReference type="ChEBI" id="CHEBI:29105"/>
    </ligand>
</feature>
<feature type="binding site" evidence="1">
    <location>
        <position position="501"/>
    </location>
    <ligand>
        <name>Zn(2+)</name>
        <dbReference type="ChEBI" id="CHEBI:29105"/>
    </ligand>
</feature>
<feature type="binding site" evidence="1">
    <location>
        <position position="523"/>
    </location>
    <ligand>
        <name>Zn(2+)</name>
        <dbReference type="ChEBI" id="CHEBI:29105"/>
    </ligand>
</feature>
<feature type="binding site" evidence="1">
    <location>
        <position position="527"/>
    </location>
    <ligand>
        <name>Mn(2+)</name>
        <dbReference type="ChEBI" id="CHEBI:29035"/>
    </ligand>
</feature>
<feature type="site" description="Important for exonuclease activity" evidence="1">
    <location>
        <position position="458"/>
    </location>
</feature>
<dbReference type="EC" id="3.1.13.-" evidence="1"/>
<dbReference type="EMBL" id="EU260463">
    <property type="protein sequence ID" value="ABY87069.1"/>
    <property type="molecule type" value="Genomic_RNA"/>
</dbReference>
<dbReference type="RefSeq" id="YP_001816783.1">
    <property type="nucleotide sequence ID" value="NC_010562.1"/>
</dbReference>
<dbReference type="SMR" id="B2C4J1"/>
<dbReference type="KEGG" id="vg:6216303"/>
<dbReference type="OrthoDB" id="3135at10239"/>
<dbReference type="Proteomes" id="UP000008449">
    <property type="component" value="Genome"/>
</dbReference>
<dbReference type="GO" id="GO:0019029">
    <property type="term" value="C:helical viral capsid"/>
    <property type="evidence" value="ECO:0007669"/>
    <property type="project" value="UniProtKB-UniRule"/>
</dbReference>
<dbReference type="GO" id="GO:0030430">
    <property type="term" value="C:host cell cytoplasm"/>
    <property type="evidence" value="ECO:0007669"/>
    <property type="project" value="UniProtKB-SubCell"/>
</dbReference>
<dbReference type="GO" id="GO:1990904">
    <property type="term" value="C:ribonucleoprotein complex"/>
    <property type="evidence" value="ECO:0007669"/>
    <property type="project" value="UniProtKB-KW"/>
</dbReference>
<dbReference type="GO" id="GO:0019013">
    <property type="term" value="C:viral nucleocapsid"/>
    <property type="evidence" value="ECO:0007669"/>
    <property type="project" value="UniProtKB-UniRule"/>
</dbReference>
<dbReference type="GO" id="GO:0016787">
    <property type="term" value="F:hydrolase activity"/>
    <property type="evidence" value="ECO:0007669"/>
    <property type="project" value="UniProtKB-KW"/>
</dbReference>
<dbReference type="GO" id="GO:0046872">
    <property type="term" value="F:metal ion binding"/>
    <property type="evidence" value="ECO:0007669"/>
    <property type="project" value="UniProtKB-UniRule"/>
</dbReference>
<dbReference type="GO" id="GO:0003723">
    <property type="term" value="F:RNA binding"/>
    <property type="evidence" value="ECO:0007669"/>
    <property type="project" value="UniProtKB-UniRule"/>
</dbReference>
<dbReference type="GO" id="GO:0039689">
    <property type="term" value="P:negative stranded viral RNA replication"/>
    <property type="evidence" value="ECO:0000250"/>
    <property type="project" value="UniProtKB"/>
</dbReference>
<dbReference type="GO" id="GO:0039696">
    <property type="term" value="P:RNA-templated viral transcription"/>
    <property type="evidence" value="ECO:0000250"/>
    <property type="project" value="UniProtKB"/>
</dbReference>
<dbReference type="GO" id="GO:0039724">
    <property type="term" value="P:symbiont-mediated suppression of host cytoplasmic pattern recognition receptor signaling pathway via inhibition of IKBKE activity"/>
    <property type="evidence" value="ECO:0007669"/>
    <property type="project" value="UniProtKB-UniRule"/>
</dbReference>
<dbReference type="FunFam" id="1.10.150.550:FF:000001">
    <property type="entry name" value="Nucleoprotein"/>
    <property type="match status" value="1"/>
</dbReference>
<dbReference type="FunFam" id="1.10.150.550:FF:000002">
    <property type="entry name" value="Nucleoprotein"/>
    <property type="match status" value="1"/>
</dbReference>
<dbReference type="FunFam" id="3.30.420.410:FF:000001">
    <property type="entry name" value="Nucleoprotein"/>
    <property type="match status" value="1"/>
</dbReference>
<dbReference type="Gene3D" id="3.30.420.410">
    <property type="entry name" value="Arenaviral nucleoprotein, C-terminal domain"/>
    <property type="match status" value="1"/>
</dbReference>
<dbReference type="Gene3D" id="1.10.150.550">
    <property type="entry name" value="Arenavirus nucleocapsid protein, head domain"/>
    <property type="match status" value="2"/>
</dbReference>
<dbReference type="HAMAP" id="MF_04085">
    <property type="entry name" value="ARENA_NCAP"/>
    <property type="match status" value="1"/>
</dbReference>
<dbReference type="InterPro" id="IPR000229">
    <property type="entry name" value="Nucleocapsid_arenaviridae"/>
</dbReference>
<dbReference type="InterPro" id="IPR035084">
    <property type="entry name" value="Nucleocapsid_C_arenaviridae"/>
</dbReference>
<dbReference type="InterPro" id="IPR038115">
    <property type="entry name" value="Nucleocapsid_C_sf"/>
</dbReference>
<dbReference type="InterPro" id="IPR035083">
    <property type="entry name" value="Nucleocapsid_N_arenaviridae"/>
</dbReference>
<dbReference type="Pfam" id="PF17290">
    <property type="entry name" value="Arena_ncap_C"/>
    <property type="match status" value="1"/>
</dbReference>
<dbReference type="Pfam" id="PF00843">
    <property type="entry name" value="Arena_nucleocap"/>
    <property type="match status" value="1"/>
</dbReference>
<dbReference type="PIRSF" id="PIRSF004029">
    <property type="entry name" value="N_ArenaV"/>
    <property type="match status" value="1"/>
</dbReference>
<proteinExistence type="inferred from homology"/>
<protein>
    <recommendedName>
        <fullName evidence="1">Nucleoprotein</fullName>
        <ecNumber evidence="1">3.1.13.-</ecNumber>
    </recommendedName>
    <alternativeName>
        <fullName evidence="1">Nucleocapsid protein</fullName>
    </alternativeName>
    <alternativeName>
        <fullName evidence="1">Protein N</fullName>
    </alternativeName>
</protein>
<reference key="1">
    <citation type="journal article" date="2008" name="PLoS Pathog.">
        <title>Chapare virus, a newly discovered arenavirus isolated from a fatal hemorrhagic fever case in Bolivia.</title>
        <authorList>
            <person name="Delgado S."/>
            <person name="Erickson B.R."/>
            <person name="Agudo R."/>
            <person name="Blair P.J."/>
            <person name="Vallejo E."/>
            <person name="Albarino C.G."/>
            <person name="Vargas J."/>
            <person name="Comer J.A."/>
            <person name="Rollin P.E."/>
            <person name="Ksiazek T.G."/>
            <person name="Olson J.G."/>
            <person name="Nichol S.T."/>
        </authorList>
    </citation>
    <scope>NUCLEOTIDE SEQUENCE [GENOMIC RNA]</scope>
</reference>
<comment type="function">
    <text evidence="1">Encapsidates the genome, protecting it from nucleases. The encapsidated genomic RNA is termed the nucleocapsid (NC). Serves as template for viral transcription and replication. The increased presence of protein N in host cell does not seem to trigger the switch from transcription to replication as observed in other negative strain RNA viruses. Through the interaction with host IKBKE, strongly inhibits the phosphorylation and nuclear translocation of host IRF3, a protein involved in interferon activation pathway, leading to the inhibition of interferon-beta and IRF3-dependent promoters activation. Also encodes a functional 3'-5' exoribonuclease that degrades preferentially dsRNA substrates and thereby participates in the suppression of interferon induction.</text>
</comment>
<comment type="subunit">
    <text evidence="1">Homomultimerizes to form the nucleocapsid. Binds to viral genomic RNA. Interacts with glycoprotein G2. Interacts with protein Z; this interaction probably directs the encapsidated genome to budding sites. Interacts with protein L; this interaction does not interfere with Z-L interaction. Interacts with host IKBKE (via Protein kinase domain); the interaction inhibits IKBKE kinase activity.</text>
</comment>
<comment type="subcellular location">
    <subcellularLocation>
        <location evidence="1">Virion</location>
    </subcellularLocation>
    <subcellularLocation>
        <location evidence="1">Host cytoplasm</location>
    </subcellularLocation>
</comment>
<comment type="domain">
    <text evidence="1">The N-terminal region is important for the cap-binding activity while the C-terminal region contains the 3'-5' exoribonuclease activity. A CCHE zinc binding site is present in the C-terminal region and may thus contribute to the substrate binding and/or the specificity of the exonuclease activity.</text>
</comment>
<comment type="similarity">
    <text evidence="1">Belongs to the arenaviridae nucleocapsid protein family.</text>
</comment>
<name>NCAP_CHAVB</name>
<organismHost>
    <name type="scientific">Homo sapiens</name>
    <name type="common">Human</name>
    <dbReference type="NCBI Taxonomy" id="9606"/>
</organismHost>
<organism>
    <name type="scientific">Chapare mammarenavirus (isolate Human/Bolivia/810419/2003)</name>
    <dbReference type="NCBI Taxonomy" id="3052302"/>
    <lineage>
        <taxon>Viruses</taxon>
        <taxon>Riboviria</taxon>
        <taxon>Orthornavirae</taxon>
        <taxon>Negarnaviricota</taxon>
        <taxon>Polyploviricotina</taxon>
        <taxon>Ellioviricetes</taxon>
        <taxon>Bunyavirales</taxon>
        <taxon>Arenaviridae</taxon>
        <taxon>Mammarenavirus</taxon>
    </lineage>
</organism>
<gene>
    <name evidence="1" type="primary">N</name>
</gene>
<evidence type="ECO:0000255" key="1">
    <source>
        <dbReference type="HAMAP-Rule" id="MF_04085"/>
    </source>
</evidence>
<sequence>MSNSKEIPSFRWTQSLRRELSSFTIPVKSDVLKDAKMIADGLDFSQVALVQRVLRKTKRTDGDLDKLRDLNREVDNLMAMKSAQKNTILKLGDLNKSELMDLASDLEKLKKKVGQTERSPVGGVYLGNLSQSQLSKRTDLLRRLGFQQPQVRSTGVVRIWDVADPTRLNNQFGSVPALTIACMTVQGGDTMGNVVQALTSLGLLYTVKFPNLADLEKLAAEHDCLQIITKDESAINISGYNFSLSAAVKAGATFLDGGNMLETIKVTPDNFSTIIKTVLGVKKRENMFIDERPGNRNPYENLLYKLCLSGEGWPYIGSRSQVKGRSWENTTVDLSLKPTQGPKAPEKVGLNVRLSHLTEIQESVVREAMSKINPSHTTWIDIEGTSNDPVELALYQPESGNYILCYRKPHDEKGFKNGSRHSHGMLLKDLESAQPGLLSYIIGLLPQDMVLTAQGSDDIKRLLDTHGRKDLKVVDVKLSSDQARNYEEQVWSDFGHLCKKHNGVVVPKKKKDKDPSQSTEPHCALLDCLMFQSVIDGQPPQIKLQSLLPEVLLFTMKPAFAI</sequence>